<gene>
    <name type="primary">marC</name>
    <name type="ordered locus">SARI_01458</name>
</gene>
<proteinExistence type="inferred from homology"/>
<dbReference type="EMBL" id="CP000880">
    <property type="protein sequence ID" value="ABX21354.1"/>
    <property type="molecule type" value="Genomic_DNA"/>
</dbReference>
<dbReference type="STRING" id="41514.SARI_01458"/>
<dbReference type="KEGG" id="ses:SARI_01458"/>
<dbReference type="HOGENOM" id="CLU_079909_2_0_6"/>
<dbReference type="Proteomes" id="UP000002084">
    <property type="component" value="Chromosome"/>
</dbReference>
<dbReference type="GO" id="GO:0005886">
    <property type="term" value="C:plasma membrane"/>
    <property type="evidence" value="ECO:0007669"/>
    <property type="project" value="UniProtKB-SubCell"/>
</dbReference>
<dbReference type="InterPro" id="IPR002771">
    <property type="entry name" value="Multi_antbiot-R_MarC"/>
</dbReference>
<dbReference type="NCBIfam" id="TIGR00427">
    <property type="entry name" value="NAAT family transporter"/>
    <property type="match status" value="1"/>
</dbReference>
<dbReference type="NCBIfam" id="NF008228">
    <property type="entry name" value="PRK10995.1"/>
    <property type="match status" value="1"/>
</dbReference>
<dbReference type="PANTHER" id="PTHR33508:SF2">
    <property type="entry name" value="UPF0056 INNER MEMBRANE PROTEIN MARC"/>
    <property type="match status" value="1"/>
</dbReference>
<dbReference type="PANTHER" id="PTHR33508">
    <property type="entry name" value="UPF0056 MEMBRANE PROTEIN YHCE"/>
    <property type="match status" value="1"/>
</dbReference>
<dbReference type="Pfam" id="PF01914">
    <property type="entry name" value="MarC"/>
    <property type="match status" value="1"/>
</dbReference>
<reference key="1">
    <citation type="submission" date="2007-11" db="EMBL/GenBank/DDBJ databases">
        <authorList>
            <consortium name="The Salmonella enterica serovar Arizonae Genome Sequencing Project"/>
            <person name="McClelland M."/>
            <person name="Sanderson E.K."/>
            <person name="Porwollik S."/>
            <person name="Spieth J."/>
            <person name="Clifton W.S."/>
            <person name="Fulton R."/>
            <person name="Chunyan W."/>
            <person name="Wollam A."/>
            <person name="Shah N."/>
            <person name="Pepin K."/>
            <person name="Bhonagiri V."/>
            <person name="Nash W."/>
            <person name="Johnson M."/>
            <person name="Thiruvilangam P."/>
            <person name="Wilson R."/>
        </authorList>
    </citation>
    <scope>NUCLEOTIDE SEQUENCE [LARGE SCALE GENOMIC DNA]</scope>
    <source>
        <strain>ATCC BAA-731 / CDC346-86 / RSK2980</strain>
    </source>
</reference>
<feature type="chain" id="PRO_0000343822" description="UPF0056 inner membrane protein MarC">
    <location>
        <begin position="1"/>
        <end position="221"/>
    </location>
</feature>
<feature type="topological domain" description="Periplasmic" evidence="2">
    <location>
        <begin position="1"/>
        <end position="7"/>
    </location>
</feature>
<feature type="transmembrane region" description="Helical" evidence="2">
    <location>
        <begin position="8"/>
        <end position="28"/>
    </location>
</feature>
<feature type="topological domain" description="Cytoplasmic" evidence="2">
    <location>
        <begin position="29"/>
        <end position="45"/>
    </location>
</feature>
<feature type="transmembrane region" description="Helical" evidence="2">
    <location>
        <begin position="46"/>
        <end position="66"/>
    </location>
</feature>
<feature type="topological domain" description="Periplasmic" evidence="2">
    <location>
        <begin position="67"/>
        <end position="68"/>
    </location>
</feature>
<feature type="transmembrane region" description="Helical" evidence="2">
    <location>
        <begin position="69"/>
        <end position="89"/>
    </location>
</feature>
<feature type="topological domain" description="Cytoplasmic" evidence="2">
    <location>
        <begin position="90"/>
        <end position="118"/>
    </location>
</feature>
<feature type="transmembrane region" description="Helical" evidence="2">
    <location>
        <begin position="119"/>
        <end position="139"/>
    </location>
</feature>
<feature type="topological domain" description="Periplasmic" evidence="2">
    <location>
        <begin position="140"/>
        <end position="154"/>
    </location>
</feature>
<feature type="transmembrane region" description="Helical" evidence="2">
    <location>
        <begin position="155"/>
        <end position="175"/>
    </location>
</feature>
<feature type="topological domain" description="Cytoplasmic" evidence="2">
    <location>
        <begin position="176"/>
        <end position="196"/>
    </location>
</feature>
<feature type="transmembrane region" description="Helical" evidence="2">
    <location>
        <begin position="197"/>
        <end position="217"/>
    </location>
</feature>
<feature type="topological domain" description="Periplasmic" evidence="2">
    <location>
        <begin position="218"/>
        <end position="221"/>
    </location>
</feature>
<accession>A9MRQ1</accession>
<keyword id="KW-0997">Cell inner membrane</keyword>
<keyword id="KW-1003">Cell membrane</keyword>
<keyword id="KW-0472">Membrane</keyword>
<keyword id="KW-1185">Reference proteome</keyword>
<keyword id="KW-0812">Transmembrane</keyword>
<keyword id="KW-1133">Transmembrane helix</keyword>
<name>MARC_SALAR</name>
<evidence type="ECO:0000250" key="1"/>
<evidence type="ECO:0000255" key="2"/>
<evidence type="ECO:0000305" key="3"/>
<protein>
    <recommendedName>
        <fullName>UPF0056 inner membrane protein MarC</fullName>
    </recommendedName>
</protein>
<organism>
    <name type="scientific">Salmonella arizonae (strain ATCC BAA-731 / CDC346-86 / RSK2980)</name>
    <dbReference type="NCBI Taxonomy" id="41514"/>
    <lineage>
        <taxon>Bacteria</taxon>
        <taxon>Pseudomonadati</taxon>
        <taxon>Pseudomonadota</taxon>
        <taxon>Gammaproteobacteria</taxon>
        <taxon>Enterobacterales</taxon>
        <taxon>Enterobacteriaceae</taxon>
        <taxon>Salmonella</taxon>
    </lineage>
</organism>
<sequence>MMDLFKAIGLGLVVLLPLANPLTTVALFLGLAGNMNSTERNRQSYMASVYVFAIMMVAYYAGQLVMNTFGISIPGLRIAGGLIVAFIGCRMLFPQQKAHESPEAKSKSEELADEPTANIAFVPLAMPSTAGPGTIAMIISSASTVRHGGEFPDWVITVAPPIIFLAVAVILWGCLRSSGAIMRLVGKGGIEAISRLMGFLLVCMGVQFIINGVLEIIKTYH</sequence>
<comment type="subcellular location">
    <subcellularLocation>
        <location evidence="1">Cell inner membrane</location>
        <topology evidence="1">Multi-pass membrane protein</topology>
    </subcellularLocation>
</comment>
<comment type="similarity">
    <text evidence="3">Belongs to the UPF0056 (MarC) family.</text>
</comment>